<keyword id="KW-1035">Host cytoplasm</keyword>
<keyword id="KW-1048">Host nucleus</keyword>
<keyword id="KW-0426">Late protein</keyword>
<keyword id="KW-0694">RNA-binding</keyword>
<keyword id="KW-0804">Transcription</keyword>
<keyword id="KW-0805">Transcription regulation</keyword>
<keyword id="KW-0946">Virion</keyword>
<keyword id="KW-0920">Virion tegument</keyword>
<comment type="function">
    <text evidence="2">Tegument protein that can bind to various RNA transcripts. Plays a role in the attenuation of selective viral and cellular mRNA degradation by modulating the activity of host shutoff RNase UL41/VHS. Also plays a role in the primary envelopment of virions in the perinuclear space, probably by interacting with two nuclear egress proteins UL31 and UL34.</text>
</comment>
<comment type="subunit">
    <text evidence="2">Interacts with US3 kinase. Interacts with UL31 and UL34; these interactions seem important for efficient virion nuclear egress. Interacts with UL41/VHS.</text>
</comment>
<comment type="subcellular location">
    <subcellularLocation>
        <location evidence="2">Virion tegument</location>
    </subcellularLocation>
    <subcellularLocation>
        <location evidence="2">Host nucleus</location>
    </subcellularLocation>
    <subcellularLocation>
        <location evidence="2">Host cytoplasm</location>
    </subcellularLocation>
    <text evidence="2">Major tegument protein of the virion. Undergoes nucleocytoplasmic shuttling during infection. Localizes to the major sites of transcription in the infected cell nucleus.</text>
</comment>
<comment type="domain">
    <text evidence="2">The nuclear export signal is CRM1-dependent.</text>
</comment>
<comment type="PTM">
    <text evidence="2">Phosphorylated by US3. This phosphorylation is required for proper nuclear localization.</text>
</comment>
<comment type="miscellaneous">
    <text evidence="1">Expressed in late in the infection.</text>
</comment>
<comment type="similarity">
    <text evidence="4">Belongs to the alphaherpesvirinae HHV-1 UL47 family.</text>
</comment>
<comment type="sequence caution" evidence="4">
    <conflict type="frameshift">
        <sequence resource="EMBL-CDS" id="AAA45767"/>
    </conflict>
</comment>
<reference key="1">
    <citation type="journal article" date="1987" name="J. Virol.">
        <title>Characterization and nucleotide sequence of two herpes simplex virus 1 genes whose products modulate alpha-trans-inducing factor-dependent activation of alpha genes.</title>
        <authorList>
            <person name="McKnight J.L.C."/>
            <person name="Pellett P.E."/>
            <person name="Jenkins F.J."/>
            <person name="Roizman B."/>
        </authorList>
    </citation>
    <scope>NUCLEOTIDE SEQUENCE [GENOMIC DNA]</scope>
</reference>
<reference key="2">
    <citation type="journal article" date="2005" name="J. Virol.">
        <title>Nuclear localizations of the herpes simplex virus type 1 tegument proteins VP13/14, vhs, and VP16 precede VP22-dependent microtubule reorganization and VP22 nuclear import.</title>
        <authorList>
            <person name="Yedowitz J.C."/>
            <person name="Kotsakis A."/>
            <person name="Schlegel E.F."/>
            <person name="Blaho J.A."/>
        </authorList>
    </citation>
    <scope>SUBCELLULAR LOCATION</scope>
</reference>
<reference key="3">
    <citation type="journal article" date="2008" name="J. Virol.">
        <title>Comprehensive characterization of extracellular herpes simplex virus type 1 virions.</title>
        <authorList>
            <person name="Loret S."/>
            <person name="Guay G."/>
            <person name="Lippe R."/>
        </authorList>
    </citation>
    <scope>SUBCELLULAR LOCATION</scope>
    <source>
        <strain>F</strain>
    </source>
</reference>
<organism>
    <name type="scientific">Human herpesvirus 1 (strain F)</name>
    <name type="common">HHV-1</name>
    <name type="synonym">Human herpes simplex virus 1</name>
    <dbReference type="NCBI Taxonomy" id="10304"/>
    <lineage>
        <taxon>Viruses</taxon>
        <taxon>Duplodnaviria</taxon>
        <taxon>Heunggongvirae</taxon>
        <taxon>Peploviricota</taxon>
        <taxon>Herviviricetes</taxon>
        <taxon>Herpesvirales</taxon>
        <taxon>Orthoherpesviridae</taxon>
        <taxon>Alphaherpesvirinae</taxon>
        <taxon>Simplexvirus</taxon>
        <taxon>Simplexvirus humanalpha1</taxon>
        <taxon>Human herpesvirus 1</taxon>
    </lineage>
</organism>
<dbReference type="EMBL" id="M15621">
    <property type="protein sequence ID" value="AAA45767.1"/>
    <property type="status" value="ALT_FRAME"/>
    <property type="molecule type" value="Genomic_DNA"/>
</dbReference>
<dbReference type="PIR" id="A26133">
    <property type="entry name" value="TNBE70"/>
</dbReference>
<dbReference type="GO" id="GO:0030430">
    <property type="term" value="C:host cell cytoplasm"/>
    <property type="evidence" value="ECO:0007669"/>
    <property type="project" value="UniProtKB-SubCell"/>
</dbReference>
<dbReference type="GO" id="GO:0042025">
    <property type="term" value="C:host cell nucleus"/>
    <property type="evidence" value="ECO:0007669"/>
    <property type="project" value="UniProtKB-SubCell"/>
</dbReference>
<dbReference type="GO" id="GO:0019033">
    <property type="term" value="C:viral tegument"/>
    <property type="evidence" value="ECO:0007669"/>
    <property type="project" value="UniProtKB-SubCell"/>
</dbReference>
<dbReference type="GO" id="GO:0003723">
    <property type="term" value="F:RNA binding"/>
    <property type="evidence" value="ECO:0007669"/>
    <property type="project" value="UniProtKB-KW"/>
</dbReference>
<dbReference type="GO" id="GO:0006355">
    <property type="term" value="P:regulation of DNA-templated transcription"/>
    <property type="evidence" value="ECO:0007669"/>
    <property type="project" value="InterPro"/>
</dbReference>
<dbReference type="InterPro" id="IPR005029">
    <property type="entry name" value="Herpes_UL47"/>
</dbReference>
<dbReference type="Pfam" id="PF03362">
    <property type="entry name" value="Herpes_UL47"/>
    <property type="match status" value="1"/>
</dbReference>
<sequence length="693" mass="73856">MSAREPAGRRRRASTRPRASPVADEPAGDGVGFMGYLRAVFRGDDDSELEALEEMAGDEPPVRRRREGPRARRRRASEAPPTSHRRASRQRPGPDAARSQSVRGRLDDDDEVPRGPPQARQGGYLGPVDARAILGRVGGSRVAPSPLFLEELQYEEDDYPEDVGPEDGGGARSPPKVEVLEGRVPGPELRAAFPLDRLAPQVAVWDESVRSALALGHPAGFYPCPDSAFGLSRVGVMHFASPDNPAVFFRQTLQQGEALAWYITGDGILDLTDRRTKTSPAQAMSFLADAVVRLAINGWVCGTRLHAEARGSDLDDRAAELRRQFASLTALRPVGAAAVPLLSAGGLVSPQSGPDAAVFRSSLGSLLYWPGVRALLDRDCRVAARYAGRMTYLATGALLARFNPDAVRCVLTREAAFLGRVLDVLAVMAEQTVHWLSVVVGARLHPHVHHPAFADVAREELFRALPLGSPAVVGAEHEALGDTAARRLLANSGLNAVLGAAVYALHTALATVTLKYARACGDAHRRRDDAAATRRILAAGLVLQRLLGFADTVVACVTLAAFDGGFTAPEVGTYTPLRYACVLRATQPLYARTTPAKFWADVRAAAEHVDLRPASSAPRAPVSGTADPAFLLKDLEPFPPAPVSGGSVLGPGVRVVDIMSQFRKLLMGDEGAAALRAHVSGRRATGLGGPPRP</sequence>
<accession>P08313</accession>
<gene>
    <name type="ORF">UL47</name>
</gene>
<name>TEG5_HHV1F</name>
<protein>
    <recommendedName>
        <fullName>Tegument protein UL47</fullName>
    </recommendedName>
    <alternativeName>
        <fullName>82/81 kDa tegument protein</fullName>
    </alternativeName>
    <alternativeName>
        <fullName>VMW82/81</fullName>
    </alternativeName>
    <alternativeName>
        <fullName>VP13/14</fullName>
    </alternativeName>
</protein>
<evidence type="ECO:0000250" key="1"/>
<evidence type="ECO:0000250" key="2">
    <source>
        <dbReference type="UniProtKB" id="P10231"/>
    </source>
</evidence>
<evidence type="ECO:0000256" key="3">
    <source>
        <dbReference type="SAM" id="MobiDB-lite"/>
    </source>
</evidence>
<evidence type="ECO:0000305" key="4"/>
<feature type="chain" id="PRO_0000116074" description="Tegument protein UL47">
    <location>
        <begin position="1"/>
        <end position="693"/>
    </location>
</feature>
<feature type="region of interest" description="Disordered" evidence="3">
    <location>
        <begin position="1"/>
        <end position="32"/>
    </location>
</feature>
<feature type="region of interest" description="Disordered" evidence="3">
    <location>
        <begin position="48"/>
        <end position="126"/>
    </location>
</feature>
<feature type="region of interest" description="RNA-binding" evidence="1">
    <location>
        <begin position="50"/>
        <end position="75"/>
    </location>
</feature>
<feature type="short sequence motif" description="Nuclear localization signal" evidence="1">
    <location>
        <begin position="63"/>
        <end position="75"/>
    </location>
</feature>
<feature type="short sequence motif" description="Nuclear export signal" evidence="1">
    <location>
        <begin position="647"/>
        <end position="670"/>
    </location>
</feature>
<feature type="compositionally biased region" description="Acidic residues" evidence="3">
    <location>
        <begin position="48"/>
        <end position="57"/>
    </location>
</feature>
<feature type="compositionally biased region" description="Basic residues" evidence="3">
    <location>
        <begin position="63"/>
        <end position="75"/>
    </location>
</feature>
<proteinExistence type="inferred from homology"/>
<organismHost>
    <name type="scientific">Homo sapiens</name>
    <name type="common">Human</name>
    <dbReference type="NCBI Taxonomy" id="9606"/>
</organismHost>